<comment type="function">
    <text evidence="1">Part of the binding-protein-dependent transport system for phosphate; probably responsible for the translocation of the substrate across the membrane.</text>
</comment>
<comment type="subcellular location">
    <subcellularLocation>
        <location evidence="3">Cell membrane</location>
        <topology evidence="3">Multi-pass membrane protein</topology>
    </subcellularLocation>
</comment>
<comment type="similarity">
    <text evidence="3">Belongs to the binding-protein-dependent transport system permease family. CysTW subfamily.</text>
</comment>
<name>PSTA2_MYCTO</name>
<reference key="1">
    <citation type="journal article" date="2002" name="J. Bacteriol.">
        <title>Whole-genome comparison of Mycobacterium tuberculosis clinical and laboratory strains.</title>
        <authorList>
            <person name="Fleischmann R.D."/>
            <person name="Alland D."/>
            <person name="Eisen J.A."/>
            <person name="Carpenter L."/>
            <person name="White O."/>
            <person name="Peterson J.D."/>
            <person name="DeBoy R.T."/>
            <person name="Dodson R.J."/>
            <person name="Gwinn M.L."/>
            <person name="Haft D.H."/>
            <person name="Hickey E.K."/>
            <person name="Kolonay J.F."/>
            <person name="Nelson W.C."/>
            <person name="Umayam L.A."/>
            <person name="Ermolaeva M.D."/>
            <person name="Salzberg S.L."/>
            <person name="Delcher A."/>
            <person name="Utterback T.R."/>
            <person name="Weidman J.F."/>
            <person name="Khouri H.M."/>
            <person name="Gill J."/>
            <person name="Mikula A."/>
            <person name="Bishai W."/>
            <person name="Jacobs W.R. Jr."/>
            <person name="Venter J.C."/>
            <person name="Fraser C.M."/>
        </authorList>
    </citation>
    <scope>NUCLEOTIDE SEQUENCE [LARGE SCALE GENOMIC DNA]</scope>
    <source>
        <strain>CDC 1551 / Oshkosh</strain>
    </source>
</reference>
<sequence>MGESAESGSRQLPAMSPPRRSVAYRRKIVDALWWAACVCCLAVVITPTLWMLIGVVSRAVPVFHWSVLVQDSQGNGGGLRNAIIGTAVLAIGVILVGGTVSVLTGIYLSEFATGKTRSILRGAYEVLSGIPSIVLGYVGYLALVVYFDWGFSLAAGVLVLSVMSIPYIAKATESALAQVPTSYREAAEALGLPAGWALRKIVLKTAMPGIVTGMLVALALAIGETAPLLYTAGWSNSPPTGQLTDSPVGYLTYPIWTFYNQPSKSAQDLSYDAALLLIVFLLLLIFIGRLINWLSRRRWDV</sequence>
<accession>P9WG08</accession>
<accession>L0T6V1</accession>
<accession>O08115</accession>
<accession>P0A626</accession>
<accession>Q50796</accession>
<dbReference type="EMBL" id="AE000516">
    <property type="protein sequence ID" value="AAK45210.1"/>
    <property type="molecule type" value="Genomic_DNA"/>
</dbReference>
<dbReference type="PIR" id="H70584">
    <property type="entry name" value="H70584"/>
</dbReference>
<dbReference type="SMR" id="P9WG08"/>
<dbReference type="KEGG" id="mtc:MT0963"/>
<dbReference type="PATRIC" id="fig|83331.31.peg.1033"/>
<dbReference type="HOGENOM" id="CLU_033621_2_0_11"/>
<dbReference type="Proteomes" id="UP000001020">
    <property type="component" value="Chromosome"/>
</dbReference>
<dbReference type="GO" id="GO:0005886">
    <property type="term" value="C:plasma membrane"/>
    <property type="evidence" value="ECO:0007669"/>
    <property type="project" value="UniProtKB-SubCell"/>
</dbReference>
<dbReference type="GO" id="GO:0005315">
    <property type="term" value="F:phosphate transmembrane transporter activity"/>
    <property type="evidence" value="ECO:0007669"/>
    <property type="project" value="InterPro"/>
</dbReference>
<dbReference type="GO" id="GO:0035435">
    <property type="term" value="P:phosphate ion transmembrane transport"/>
    <property type="evidence" value="ECO:0007669"/>
    <property type="project" value="InterPro"/>
</dbReference>
<dbReference type="CDD" id="cd06261">
    <property type="entry name" value="TM_PBP2"/>
    <property type="match status" value="1"/>
</dbReference>
<dbReference type="Gene3D" id="1.10.3720.10">
    <property type="entry name" value="MetI-like"/>
    <property type="match status" value="1"/>
</dbReference>
<dbReference type="InterPro" id="IPR000515">
    <property type="entry name" value="MetI-like"/>
</dbReference>
<dbReference type="InterPro" id="IPR035906">
    <property type="entry name" value="MetI-like_sf"/>
</dbReference>
<dbReference type="InterPro" id="IPR005672">
    <property type="entry name" value="Phosphate_PstA"/>
</dbReference>
<dbReference type="InterPro" id="IPR051408">
    <property type="entry name" value="Phosphate_transprt_permease"/>
</dbReference>
<dbReference type="NCBIfam" id="TIGR00974">
    <property type="entry name" value="3a0107s02c"/>
    <property type="match status" value="1"/>
</dbReference>
<dbReference type="PANTHER" id="PTHR42922">
    <property type="entry name" value="PHOSPHATE TRANSPORT SYSTEM PERMEASE PROTEIN PSTA"/>
    <property type="match status" value="1"/>
</dbReference>
<dbReference type="PANTHER" id="PTHR42922:SF1">
    <property type="entry name" value="PHOSPHATE TRANSPORT SYSTEM PERMEASE PROTEIN PSTA"/>
    <property type="match status" value="1"/>
</dbReference>
<dbReference type="Pfam" id="PF00528">
    <property type="entry name" value="BPD_transp_1"/>
    <property type="match status" value="1"/>
</dbReference>
<dbReference type="SUPFAM" id="SSF161098">
    <property type="entry name" value="MetI-like"/>
    <property type="match status" value="1"/>
</dbReference>
<dbReference type="PROSITE" id="PS50928">
    <property type="entry name" value="ABC_TM1"/>
    <property type="match status" value="1"/>
</dbReference>
<protein>
    <recommendedName>
        <fullName>Phosphate transport system permease protein PstA 2</fullName>
    </recommendedName>
</protein>
<feature type="chain" id="PRO_0000428444" description="Phosphate transport system permease protein PstA 2">
    <location>
        <begin position="1"/>
        <end position="301"/>
    </location>
</feature>
<feature type="transmembrane region" description="Helical" evidence="2">
    <location>
        <begin position="36"/>
        <end position="56"/>
    </location>
</feature>
<feature type="transmembrane region" description="Helical" evidence="2">
    <location>
        <begin position="83"/>
        <end position="103"/>
    </location>
</feature>
<feature type="transmembrane region" description="Helical" evidence="2">
    <location>
        <begin position="127"/>
        <end position="147"/>
    </location>
</feature>
<feature type="transmembrane region" description="Helical" evidence="2">
    <location>
        <begin position="149"/>
        <end position="169"/>
    </location>
</feature>
<feature type="transmembrane region" description="Helical" evidence="2">
    <location>
        <begin position="209"/>
        <end position="229"/>
    </location>
</feature>
<feature type="transmembrane region" description="Helical" evidence="2">
    <location>
        <begin position="274"/>
        <end position="294"/>
    </location>
</feature>
<feature type="domain" description="ABC transmembrane type-1" evidence="2">
    <location>
        <begin position="83"/>
        <end position="288"/>
    </location>
</feature>
<keyword id="KW-1003">Cell membrane</keyword>
<keyword id="KW-0472">Membrane</keyword>
<keyword id="KW-0592">Phosphate transport</keyword>
<keyword id="KW-1185">Reference proteome</keyword>
<keyword id="KW-0812">Transmembrane</keyword>
<keyword id="KW-1133">Transmembrane helix</keyword>
<keyword id="KW-0813">Transport</keyword>
<gene>
    <name type="primary">pstA2</name>
    <name type="ordered locus">MT0963</name>
</gene>
<organism>
    <name type="scientific">Mycobacterium tuberculosis (strain CDC 1551 / Oshkosh)</name>
    <dbReference type="NCBI Taxonomy" id="83331"/>
    <lineage>
        <taxon>Bacteria</taxon>
        <taxon>Bacillati</taxon>
        <taxon>Actinomycetota</taxon>
        <taxon>Actinomycetes</taxon>
        <taxon>Mycobacteriales</taxon>
        <taxon>Mycobacteriaceae</taxon>
        <taxon>Mycobacterium</taxon>
        <taxon>Mycobacterium tuberculosis complex</taxon>
    </lineage>
</organism>
<evidence type="ECO:0000250" key="1"/>
<evidence type="ECO:0000255" key="2">
    <source>
        <dbReference type="PROSITE-ProRule" id="PRU00441"/>
    </source>
</evidence>
<evidence type="ECO:0000305" key="3"/>
<proteinExistence type="inferred from homology"/>